<keyword id="KW-1185">Reference proteome</keyword>
<keyword id="KW-0687">Ribonucleoprotein</keyword>
<keyword id="KW-0689">Ribosomal protein</keyword>
<keyword id="KW-0694">RNA-binding</keyword>
<keyword id="KW-0699">rRNA-binding</keyword>
<protein>
    <recommendedName>
        <fullName evidence="1">Small ribosomal subunit protein uS8</fullName>
    </recommendedName>
    <alternativeName>
        <fullName evidence="2">30S ribosomal protein S8</fullName>
    </alternativeName>
</protein>
<feature type="chain" id="PRO_0000126399" description="Small ribosomal subunit protein uS8">
    <location>
        <begin position="1"/>
        <end position="132"/>
    </location>
</feature>
<proteinExistence type="inferred from homology"/>
<reference key="1">
    <citation type="journal article" date="2003" name="Nucleic Acids Res.">
        <title>The complete genome sequence and analysis of Corynebacterium diphtheriae NCTC13129.</title>
        <authorList>
            <person name="Cerdeno-Tarraga A.-M."/>
            <person name="Efstratiou A."/>
            <person name="Dover L.G."/>
            <person name="Holden M.T.G."/>
            <person name="Pallen M.J."/>
            <person name="Bentley S.D."/>
            <person name="Besra G.S."/>
            <person name="Churcher C.M."/>
            <person name="James K.D."/>
            <person name="De Zoysa A."/>
            <person name="Chillingworth T."/>
            <person name="Cronin A."/>
            <person name="Dowd L."/>
            <person name="Feltwell T."/>
            <person name="Hamlin N."/>
            <person name="Holroyd S."/>
            <person name="Jagels K."/>
            <person name="Moule S."/>
            <person name="Quail M.A."/>
            <person name="Rabbinowitsch E."/>
            <person name="Rutherford K.M."/>
            <person name="Thomson N.R."/>
            <person name="Unwin L."/>
            <person name="Whitehead S."/>
            <person name="Barrell B.G."/>
            <person name="Parkhill J."/>
        </authorList>
    </citation>
    <scope>NUCLEOTIDE SEQUENCE [LARGE SCALE GENOMIC DNA]</scope>
    <source>
        <strain>ATCC 700971 / NCTC 13129 / Biotype gravis</strain>
    </source>
</reference>
<dbReference type="EMBL" id="BX248355">
    <property type="protein sequence ID" value="CAE49035.1"/>
    <property type="molecule type" value="Genomic_DNA"/>
</dbReference>
<dbReference type="RefSeq" id="WP_004566821.1">
    <property type="nucleotide sequence ID" value="NC_002935.2"/>
</dbReference>
<dbReference type="SMR" id="Q6NJ88"/>
<dbReference type="STRING" id="257309.DIP0524"/>
<dbReference type="KEGG" id="cdi:DIP0524"/>
<dbReference type="HOGENOM" id="CLU_098428_0_1_11"/>
<dbReference type="Proteomes" id="UP000002198">
    <property type="component" value="Chromosome"/>
</dbReference>
<dbReference type="GO" id="GO:1990904">
    <property type="term" value="C:ribonucleoprotein complex"/>
    <property type="evidence" value="ECO:0007669"/>
    <property type="project" value="UniProtKB-KW"/>
</dbReference>
<dbReference type="GO" id="GO:0005840">
    <property type="term" value="C:ribosome"/>
    <property type="evidence" value="ECO:0007669"/>
    <property type="project" value="UniProtKB-KW"/>
</dbReference>
<dbReference type="GO" id="GO:0019843">
    <property type="term" value="F:rRNA binding"/>
    <property type="evidence" value="ECO:0007669"/>
    <property type="project" value="UniProtKB-UniRule"/>
</dbReference>
<dbReference type="GO" id="GO:0003735">
    <property type="term" value="F:structural constituent of ribosome"/>
    <property type="evidence" value="ECO:0007669"/>
    <property type="project" value="InterPro"/>
</dbReference>
<dbReference type="GO" id="GO:0006412">
    <property type="term" value="P:translation"/>
    <property type="evidence" value="ECO:0007669"/>
    <property type="project" value="UniProtKB-UniRule"/>
</dbReference>
<dbReference type="FunFam" id="3.30.1370.30:FF:000002">
    <property type="entry name" value="30S ribosomal protein S8"/>
    <property type="match status" value="1"/>
</dbReference>
<dbReference type="FunFam" id="3.30.1490.10:FF:000001">
    <property type="entry name" value="30S ribosomal protein S8"/>
    <property type="match status" value="1"/>
</dbReference>
<dbReference type="Gene3D" id="3.30.1370.30">
    <property type="match status" value="1"/>
</dbReference>
<dbReference type="Gene3D" id="3.30.1490.10">
    <property type="match status" value="1"/>
</dbReference>
<dbReference type="HAMAP" id="MF_01302_B">
    <property type="entry name" value="Ribosomal_uS8_B"/>
    <property type="match status" value="1"/>
</dbReference>
<dbReference type="InterPro" id="IPR000630">
    <property type="entry name" value="Ribosomal_uS8"/>
</dbReference>
<dbReference type="InterPro" id="IPR035987">
    <property type="entry name" value="Ribosomal_uS8_sf"/>
</dbReference>
<dbReference type="NCBIfam" id="NF001109">
    <property type="entry name" value="PRK00136.1"/>
    <property type="match status" value="1"/>
</dbReference>
<dbReference type="PANTHER" id="PTHR11758">
    <property type="entry name" value="40S RIBOSOMAL PROTEIN S15A"/>
    <property type="match status" value="1"/>
</dbReference>
<dbReference type="Pfam" id="PF00410">
    <property type="entry name" value="Ribosomal_S8"/>
    <property type="match status" value="1"/>
</dbReference>
<dbReference type="SUPFAM" id="SSF56047">
    <property type="entry name" value="Ribosomal protein S8"/>
    <property type="match status" value="1"/>
</dbReference>
<comment type="function">
    <text evidence="1">One of the primary rRNA binding proteins, it binds directly to 16S rRNA central domain where it helps coordinate assembly of the platform of the 30S subunit.</text>
</comment>
<comment type="subunit">
    <text evidence="1">Part of the 30S ribosomal subunit. Contacts proteins S5 and S12.</text>
</comment>
<comment type="similarity">
    <text evidence="1">Belongs to the universal ribosomal protein uS8 family.</text>
</comment>
<name>RS8_CORDI</name>
<accession>Q6NJ88</accession>
<evidence type="ECO:0000255" key="1">
    <source>
        <dbReference type="HAMAP-Rule" id="MF_01302"/>
    </source>
</evidence>
<evidence type="ECO:0000305" key="2"/>
<sequence>MTMTDPIADMLSRVRNANNAHHDAVSMPSSKLKANIAEILKSEGYIADYKVEDAKVGKTLTLDLKYGPNRQRSIEGVRRVSKPGLRVYAKSTNLPQVLGGLGVAIISTSHGLLTDRQATEKGVGGEVLAYVW</sequence>
<gene>
    <name evidence="1" type="primary">rpsH</name>
    <name type="ordered locus">DIP0524</name>
</gene>
<organism>
    <name type="scientific">Corynebacterium diphtheriae (strain ATCC 700971 / NCTC 13129 / Biotype gravis)</name>
    <dbReference type="NCBI Taxonomy" id="257309"/>
    <lineage>
        <taxon>Bacteria</taxon>
        <taxon>Bacillati</taxon>
        <taxon>Actinomycetota</taxon>
        <taxon>Actinomycetes</taxon>
        <taxon>Mycobacteriales</taxon>
        <taxon>Corynebacteriaceae</taxon>
        <taxon>Corynebacterium</taxon>
    </lineage>
</organism>